<gene>
    <name type="primary">CP1</name>
</gene>
<keyword id="KW-1015">Disulfide bond</keyword>
<keyword id="KW-0325">Glycoprotein</keyword>
<keyword id="KW-0378">Hydrolase</keyword>
<keyword id="KW-0645">Protease</keyword>
<keyword id="KW-0732">Signal</keyword>
<keyword id="KW-0788">Thiol protease</keyword>
<keyword id="KW-0926">Vacuole</keyword>
<keyword id="KW-0865">Zymogen</keyword>
<accession>P92131</accession>
<accession>Q9GP25</accession>
<comment type="function">
    <text evidence="6">Thiol protease which is required for parasite excystation and invasion of the proximal small intestine of the human host.</text>
</comment>
<comment type="subcellular location">
    <subcellularLocation>
        <location evidence="6">Vacuole</location>
    </subcellularLocation>
</comment>
<comment type="developmental stage">
    <text>To initiate infection, trophozoites emerge from a cyst in the host. Excystation is blocked by specific cysteine protease inhibitors. Vacuoles release it just prior to excystation.</text>
</comment>
<comment type="induction">
    <text evidence="6">Not expressed without supplemental iron.</text>
</comment>
<comment type="similarity">
    <text evidence="3 4 5">Belongs to the peptidase C1 family.</text>
</comment>
<comment type="sequence caution" evidence="7">
    <conflict type="erroneous initiation">
        <sequence resource="EMBL-CDS" id="AAB58258"/>
    </conflict>
</comment>
<evidence type="ECO:0000250" key="1"/>
<evidence type="ECO:0000255" key="2"/>
<evidence type="ECO:0000255" key="3">
    <source>
        <dbReference type="PROSITE-ProRule" id="PRU10088"/>
    </source>
</evidence>
<evidence type="ECO:0000255" key="4">
    <source>
        <dbReference type="PROSITE-ProRule" id="PRU10089"/>
    </source>
</evidence>
<evidence type="ECO:0000255" key="5">
    <source>
        <dbReference type="PROSITE-ProRule" id="PRU10090"/>
    </source>
</evidence>
<evidence type="ECO:0000269" key="6">
    <source>
    </source>
</evidence>
<evidence type="ECO:0000305" key="7"/>
<organism>
    <name type="scientific">Giardia intestinalis</name>
    <name type="common">Giardia lamblia</name>
    <dbReference type="NCBI Taxonomy" id="5741"/>
    <lineage>
        <taxon>Eukaryota</taxon>
        <taxon>Metamonada</taxon>
        <taxon>Diplomonadida</taxon>
        <taxon>Hexamitidae</taxon>
        <taxon>Giardiinae</taxon>
        <taxon>Giardia</taxon>
    </lineage>
</organism>
<sequence>MALSLLLAVVCAKPLVSRAELRRIQALNPPWKAGMPKRFENVTEDEFRSMLIRPDRLRARSGSLPPISITEVQELVDPIPPQFDFRDEYPQCVKPALDQGSCGSCWAFSAIGVFGDRRCAMGIDKEAVSYSQQHLISCSLENFGCDGGDFQPTWSFLTFTGATTAECVKYVDYGHTVASPCPAVCDDGSPIQLYKAHGYGQVSKSVPAIMGMLVAGGPLQTMIVVYADLSYYESGVYKHTYGTINLGFHALEIVGYGTTDDGTDYWIIKNSWGPDWGENGYFRIVRGVNECRIEDEIYAVYLD</sequence>
<reference key="1">
    <citation type="journal article" date="1997" name="Cell">
        <title>A primitive enzyme for a primitive cell: the protease required for excystation of Giardia.</title>
        <authorList>
            <person name="Ward W."/>
            <person name="Alvarado L."/>
            <person name="Rawlings N.D."/>
            <person name="Engel J.C."/>
            <person name="Franklin C."/>
            <person name="McKerrow J.H."/>
        </authorList>
    </citation>
    <scope>NUCLEOTIDE SEQUENCE [GENOMIC DNA]</scope>
    <scope>FUNCTION</scope>
    <scope>SUBCELLULAR LOCATION</scope>
    <scope>INDUCTION</scope>
    <source>
        <strain>ATCC 30957 / WB</strain>
    </source>
</reference>
<reference key="2">
    <citation type="journal article" date="2002" name="Mol. Biochem. Parasitol.">
        <title>Cysteine proteases of parasitic organisms.</title>
        <authorList>
            <person name="Sajid M."/>
            <person name="McKerrow J.H."/>
        </authorList>
    </citation>
    <scope>NUCLEOTIDE SEQUENCE [GENOMIC DNA]</scope>
    <source>
        <strain>ATCC 30957 / WB</strain>
    </source>
</reference>
<reference key="3">
    <citation type="unpublished observations" date="2003-06">
        <authorList>
            <person name="Sajid M."/>
        </authorList>
    </citation>
    <scope>SEQUENCE REVISION</scope>
</reference>
<name>CATB1_GIAIN</name>
<dbReference type="EC" id="3.4.22.-"/>
<dbReference type="EMBL" id="U83275">
    <property type="protein sequence ID" value="AAB58258.1"/>
    <property type="status" value="ALT_INIT"/>
    <property type="molecule type" value="Genomic_DNA"/>
</dbReference>
<dbReference type="EMBL" id="AJ302011">
    <property type="protein sequence ID" value="CAC18646.1"/>
    <property type="molecule type" value="Genomic_DNA"/>
</dbReference>
<dbReference type="SMR" id="P92131"/>
<dbReference type="MEROPS" id="C01.094"/>
<dbReference type="GlyCosmos" id="P92131">
    <property type="glycosylation" value="1 site, No reported glycans"/>
</dbReference>
<dbReference type="VEuPathDB" id="GiardiaDB:DHA2_150845"/>
<dbReference type="VEuPathDB" id="GiardiaDB:GL50581_3619"/>
<dbReference type="VEuPathDB" id="GiardiaDB:GL50803_0010217"/>
<dbReference type="VEuPathDB" id="GiardiaDB:QR46_2631"/>
<dbReference type="eggNOG" id="KOG1543">
    <property type="taxonomic scope" value="Eukaryota"/>
</dbReference>
<dbReference type="GO" id="GO:0005773">
    <property type="term" value="C:vacuole"/>
    <property type="evidence" value="ECO:0007669"/>
    <property type="project" value="UniProtKB-SubCell"/>
</dbReference>
<dbReference type="GO" id="GO:0008234">
    <property type="term" value="F:cysteine-type peptidase activity"/>
    <property type="evidence" value="ECO:0007669"/>
    <property type="project" value="UniProtKB-KW"/>
</dbReference>
<dbReference type="GO" id="GO:0006508">
    <property type="term" value="P:proteolysis"/>
    <property type="evidence" value="ECO:0007669"/>
    <property type="project" value="UniProtKB-KW"/>
</dbReference>
<dbReference type="CDD" id="cd02620">
    <property type="entry name" value="Peptidase_C1A_CathepsinB"/>
    <property type="match status" value="1"/>
</dbReference>
<dbReference type="FunFam" id="3.90.70.10:FF:000096">
    <property type="entry name" value="Cathepsin B-like cysteine protease"/>
    <property type="match status" value="1"/>
</dbReference>
<dbReference type="Gene3D" id="3.90.70.10">
    <property type="entry name" value="Cysteine proteinases"/>
    <property type="match status" value="1"/>
</dbReference>
<dbReference type="InterPro" id="IPR038765">
    <property type="entry name" value="Papain-like_cys_pep_sf"/>
</dbReference>
<dbReference type="InterPro" id="IPR025661">
    <property type="entry name" value="Pept_asp_AS"/>
</dbReference>
<dbReference type="InterPro" id="IPR000169">
    <property type="entry name" value="Pept_cys_AS"/>
</dbReference>
<dbReference type="InterPro" id="IPR025660">
    <property type="entry name" value="Pept_his_AS"/>
</dbReference>
<dbReference type="InterPro" id="IPR013128">
    <property type="entry name" value="Peptidase_C1A"/>
</dbReference>
<dbReference type="InterPro" id="IPR000668">
    <property type="entry name" value="Peptidase_C1A_C"/>
</dbReference>
<dbReference type="PANTHER" id="PTHR12411">
    <property type="entry name" value="CYSTEINE PROTEASE FAMILY C1-RELATED"/>
    <property type="match status" value="1"/>
</dbReference>
<dbReference type="Pfam" id="PF00112">
    <property type="entry name" value="Peptidase_C1"/>
    <property type="match status" value="1"/>
</dbReference>
<dbReference type="PRINTS" id="PR00705">
    <property type="entry name" value="PAPAIN"/>
</dbReference>
<dbReference type="SMART" id="SM00645">
    <property type="entry name" value="Pept_C1"/>
    <property type="match status" value="1"/>
</dbReference>
<dbReference type="SUPFAM" id="SSF54001">
    <property type="entry name" value="Cysteine proteinases"/>
    <property type="match status" value="1"/>
</dbReference>
<dbReference type="PROSITE" id="PS00640">
    <property type="entry name" value="THIOL_PROTEASE_ASN"/>
    <property type="match status" value="1"/>
</dbReference>
<dbReference type="PROSITE" id="PS00139">
    <property type="entry name" value="THIOL_PROTEASE_CYS"/>
    <property type="match status" value="1"/>
</dbReference>
<dbReference type="PROSITE" id="PS00639">
    <property type="entry name" value="THIOL_PROTEASE_HIS"/>
    <property type="match status" value="1"/>
</dbReference>
<protein>
    <recommendedName>
        <fullName>Cathepsin B-like CP1</fullName>
        <ecNumber>3.4.22.-</ecNumber>
    </recommendedName>
    <alternativeName>
        <fullName>Cathepsin B-like protease B1</fullName>
    </alternativeName>
</protein>
<proteinExistence type="evidence at transcript level"/>
<feature type="signal peptide" evidence="2">
    <location>
        <begin position="1"/>
        <end position="19"/>
    </location>
</feature>
<feature type="propeptide" id="PRO_0000026164" description="Activation peptide">
    <location>
        <begin position="20"/>
        <end status="unknown"/>
    </location>
</feature>
<feature type="chain" id="PRO_0000026165" description="Cathepsin B-like CP1">
    <location>
        <begin status="unknown"/>
        <end position="303"/>
    </location>
</feature>
<feature type="active site" evidence="1">
    <location>
        <position position="105"/>
    </location>
</feature>
<feature type="active site" evidence="1">
    <location>
        <position position="249"/>
    </location>
</feature>
<feature type="active site" evidence="1">
    <location>
        <position position="270"/>
    </location>
</feature>
<feature type="glycosylation site" description="N-linked (GlcNAc...) asparagine" evidence="2">
    <location>
        <position position="41"/>
    </location>
</feature>
<feature type="disulfide bond" evidence="1">
    <location>
        <begin position="92"/>
        <end position="119"/>
    </location>
</feature>
<feature type="disulfide bond" evidence="1">
    <location>
        <begin position="102"/>
        <end position="145"/>
    </location>
</feature>
<feature type="disulfide bond" evidence="1">
    <location>
        <begin position="138"/>
        <end position="181"/>
    </location>
</feature>
<feature type="sequence conflict" description="In Ref. 1; AAB58258/CAC18646." evidence="7" ref="1">
    <original>S</original>
    <variation>E</variation>
    <location>
        <position position="104"/>
    </location>
</feature>